<proteinExistence type="inferred from homology"/>
<comment type="similarity">
    <text evidence="1">Belongs to the UPF0398 family.</text>
</comment>
<comment type="sequence caution" evidence="2">
    <conflict type="erroneous initiation">
        <sequence resource="EMBL-CDS" id="ACA82432"/>
    </conflict>
</comment>
<gene>
    <name type="ordered locus">LCK_00599</name>
</gene>
<evidence type="ECO:0000255" key="1">
    <source>
        <dbReference type="HAMAP-Rule" id="MF_01575"/>
    </source>
</evidence>
<evidence type="ECO:0000305" key="2"/>
<keyword id="KW-1185">Reference proteome</keyword>
<protein>
    <recommendedName>
        <fullName evidence="1">UPF0398 protein LCK_00599</fullName>
    </recommendedName>
</protein>
<accession>B1MY30</accession>
<name>Y599_LEUCK</name>
<sequence length="189" mass="22006">MSRLWITGYRSYEIGTFGDKDPKILVMKYAIKQLVRQQLENGLEWVLTGGQLGVEQWTIEVVLALKKDWPMLKVAMMLPFEDFGSQWQPNSQSKLQVLKQGVDFVDSVSHATYQGPGQLQNYQAFMLNHTDAALLFYDPEFEGKAKYDYKIIQQHQRKTPYPLTLIDMDQLQDYATTYSEQQAENDFFE</sequence>
<organism>
    <name type="scientific">Leuconostoc citreum (strain KM20)</name>
    <dbReference type="NCBI Taxonomy" id="349519"/>
    <lineage>
        <taxon>Bacteria</taxon>
        <taxon>Bacillati</taxon>
        <taxon>Bacillota</taxon>
        <taxon>Bacilli</taxon>
        <taxon>Lactobacillales</taxon>
        <taxon>Lactobacillaceae</taxon>
        <taxon>Leuconostoc</taxon>
    </lineage>
</organism>
<dbReference type="EMBL" id="DQ489736">
    <property type="protein sequence ID" value="ACA82432.1"/>
    <property type="status" value="ALT_INIT"/>
    <property type="molecule type" value="Genomic_DNA"/>
</dbReference>
<dbReference type="RefSeq" id="WP_036061062.1">
    <property type="nucleotide sequence ID" value="NC_010471.1"/>
</dbReference>
<dbReference type="SMR" id="B1MY30"/>
<dbReference type="STRING" id="349519.LCK_00599"/>
<dbReference type="KEGG" id="lci:LCK_00599"/>
<dbReference type="eggNOG" id="COG4474">
    <property type="taxonomic scope" value="Bacteria"/>
</dbReference>
<dbReference type="HOGENOM" id="CLU_105319_0_0_9"/>
<dbReference type="Proteomes" id="UP000002166">
    <property type="component" value="Chromosome"/>
</dbReference>
<dbReference type="Gene3D" id="3.40.50.450">
    <property type="match status" value="1"/>
</dbReference>
<dbReference type="HAMAP" id="MF_01575">
    <property type="entry name" value="UPF0398"/>
    <property type="match status" value="1"/>
</dbReference>
<dbReference type="InterPro" id="IPR010697">
    <property type="entry name" value="YspA"/>
</dbReference>
<dbReference type="NCBIfam" id="NF010181">
    <property type="entry name" value="PRK13660.1"/>
    <property type="match status" value="1"/>
</dbReference>
<dbReference type="PANTHER" id="PTHR38440:SF1">
    <property type="entry name" value="UPF0398 PROTEIN SPR0331"/>
    <property type="match status" value="1"/>
</dbReference>
<dbReference type="PANTHER" id="PTHR38440">
    <property type="entry name" value="UPF0398 PROTEIN YPSA"/>
    <property type="match status" value="1"/>
</dbReference>
<dbReference type="Pfam" id="PF06908">
    <property type="entry name" value="YpsA"/>
    <property type="match status" value="1"/>
</dbReference>
<dbReference type="PIRSF" id="PIRSF021290">
    <property type="entry name" value="DUF1273"/>
    <property type="match status" value="1"/>
</dbReference>
<dbReference type="SUPFAM" id="SSF102405">
    <property type="entry name" value="MCP/YpsA-like"/>
    <property type="match status" value="1"/>
</dbReference>
<feature type="chain" id="PRO_0000382549" description="UPF0398 protein LCK_00599">
    <location>
        <begin position="1"/>
        <end position="189"/>
    </location>
</feature>
<reference key="1">
    <citation type="journal article" date="2008" name="J. Bacteriol.">
        <title>Complete genome sequence of Leuconostoc citreum KM20.</title>
        <authorList>
            <person name="Kim J.F."/>
            <person name="Jeong H."/>
            <person name="Lee J.-S."/>
            <person name="Choi S.-H."/>
            <person name="Ha M."/>
            <person name="Hur C.-G."/>
            <person name="Kim J.-S."/>
            <person name="Lee S."/>
            <person name="Park H.-S."/>
            <person name="Park Y.-H."/>
            <person name="Oh T.K."/>
        </authorList>
    </citation>
    <scope>NUCLEOTIDE SEQUENCE [LARGE SCALE GENOMIC DNA]</scope>
    <source>
        <strain>KM20</strain>
    </source>
</reference>